<keyword id="KW-0378">Hydrolase</keyword>
<keyword id="KW-0479">Metal-binding</keyword>
<keyword id="KW-0482">Metalloprotease</keyword>
<keyword id="KW-0645">Protease</keyword>
<keyword id="KW-1185">Reference proteome</keyword>
<keyword id="KW-0862">Zinc</keyword>
<accession>A1SR15</accession>
<protein>
    <recommendedName>
        <fullName>UPF0758 protein Ping_0056</fullName>
    </recommendedName>
</protein>
<organism>
    <name type="scientific">Psychromonas ingrahamii (strain DSM 17664 / CCUG 51855 / 37)</name>
    <dbReference type="NCBI Taxonomy" id="357804"/>
    <lineage>
        <taxon>Bacteria</taxon>
        <taxon>Pseudomonadati</taxon>
        <taxon>Pseudomonadota</taxon>
        <taxon>Gammaproteobacteria</taxon>
        <taxon>Alteromonadales</taxon>
        <taxon>Psychromonadaceae</taxon>
        <taxon>Psychromonas</taxon>
    </lineage>
</organism>
<evidence type="ECO:0000255" key="1">
    <source>
        <dbReference type="PROSITE-ProRule" id="PRU01182"/>
    </source>
</evidence>
<evidence type="ECO:0000305" key="2"/>
<name>Y056_PSYIN</name>
<feature type="chain" id="PRO_0000322699" description="UPF0758 protein Ping_0056">
    <location>
        <begin position="1"/>
        <end position="225"/>
    </location>
</feature>
<feature type="domain" description="MPN" evidence="1">
    <location>
        <begin position="103"/>
        <end position="225"/>
    </location>
</feature>
<feature type="short sequence motif" description="JAMM motif" evidence="1">
    <location>
        <begin position="174"/>
        <end position="187"/>
    </location>
</feature>
<feature type="binding site" evidence="1">
    <location>
        <position position="174"/>
    </location>
    <ligand>
        <name>Zn(2+)</name>
        <dbReference type="ChEBI" id="CHEBI:29105"/>
        <note>catalytic</note>
    </ligand>
</feature>
<feature type="binding site" evidence="1">
    <location>
        <position position="176"/>
    </location>
    <ligand>
        <name>Zn(2+)</name>
        <dbReference type="ChEBI" id="CHEBI:29105"/>
        <note>catalytic</note>
    </ligand>
</feature>
<feature type="binding site" evidence="1">
    <location>
        <position position="187"/>
    </location>
    <ligand>
        <name>Zn(2+)</name>
        <dbReference type="ChEBI" id="CHEBI:29105"/>
        <note>catalytic</note>
    </ligand>
</feature>
<sequence length="225" mass="24894">MTKLKDWPNQERPREKLLQKGTAALSDAELLAIFLRTGCRGVDVVTLSKQLLSQFGSLHALFAASESDFCEKKGLGQAKYVQLQAVLEMSSRYLQEPLSKGNALTSAAQTKAFLIAKMHNLPYEVFAAILLDTQHRIIRFHEFFFGSIDCATVHPRIIAQKVLSENAAAIILVHNHPSGDPSASEADKMITQKIVSALQLIDVRVLDHLVVGHKKCTSFAENGWI</sequence>
<comment type="similarity">
    <text evidence="2">Belongs to the UPF0758 family.</text>
</comment>
<reference key="1">
    <citation type="journal article" date="2008" name="BMC Genomics">
        <title>Genomics of an extreme psychrophile, Psychromonas ingrahamii.</title>
        <authorList>
            <person name="Riley M."/>
            <person name="Staley J.T."/>
            <person name="Danchin A."/>
            <person name="Wang T.Z."/>
            <person name="Brettin T.S."/>
            <person name="Hauser L.J."/>
            <person name="Land M.L."/>
            <person name="Thompson L.S."/>
        </authorList>
    </citation>
    <scope>NUCLEOTIDE SEQUENCE [LARGE SCALE GENOMIC DNA]</scope>
    <source>
        <strain>DSM 17664 / CCUG 51855 / 37</strain>
    </source>
</reference>
<dbReference type="EMBL" id="CP000510">
    <property type="protein sequence ID" value="ABM01930.1"/>
    <property type="molecule type" value="Genomic_DNA"/>
</dbReference>
<dbReference type="RefSeq" id="WP_011768489.1">
    <property type="nucleotide sequence ID" value="NC_008709.1"/>
</dbReference>
<dbReference type="SMR" id="A1SR15"/>
<dbReference type="STRING" id="357804.Ping_0056"/>
<dbReference type="KEGG" id="pin:Ping_0056"/>
<dbReference type="eggNOG" id="COG2003">
    <property type="taxonomic scope" value="Bacteria"/>
</dbReference>
<dbReference type="HOGENOM" id="CLU_073529_0_1_6"/>
<dbReference type="OrthoDB" id="9804482at2"/>
<dbReference type="Proteomes" id="UP000000639">
    <property type="component" value="Chromosome"/>
</dbReference>
<dbReference type="GO" id="GO:0046872">
    <property type="term" value="F:metal ion binding"/>
    <property type="evidence" value="ECO:0007669"/>
    <property type="project" value="UniProtKB-KW"/>
</dbReference>
<dbReference type="GO" id="GO:0008237">
    <property type="term" value="F:metallopeptidase activity"/>
    <property type="evidence" value="ECO:0007669"/>
    <property type="project" value="UniProtKB-KW"/>
</dbReference>
<dbReference type="GO" id="GO:0006508">
    <property type="term" value="P:proteolysis"/>
    <property type="evidence" value="ECO:0007669"/>
    <property type="project" value="UniProtKB-KW"/>
</dbReference>
<dbReference type="CDD" id="cd08071">
    <property type="entry name" value="MPN_DUF2466"/>
    <property type="match status" value="1"/>
</dbReference>
<dbReference type="Gene3D" id="1.10.150.20">
    <property type="entry name" value="5' to 3' exonuclease, C-terminal subdomain"/>
    <property type="match status" value="1"/>
</dbReference>
<dbReference type="Gene3D" id="3.40.140.10">
    <property type="entry name" value="Cytidine Deaminase, domain 2"/>
    <property type="match status" value="1"/>
</dbReference>
<dbReference type="InterPro" id="IPR037518">
    <property type="entry name" value="MPN"/>
</dbReference>
<dbReference type="InterPro" id="IPR025657">
    <property type="entry name" value="RadC_JAB"/>
</dbReference>
<dbReference type="InterPro" id="IPR010994">
    <property type="entry name" value="RuvA_2-like"/>
</dbReference>
<dbReference type="InterPro" id="IPR001405">
    <property type="entry name" value="UPF0758"/>
</dbReference>
<dbReference type="InterPro" id="IPR020891">
    <property type="entry name" value="UPF0758_CS"/>
</dbReference>
<dbReference type="InterPro" id="IPR046778">
    <property type="entry name" value="UPF0758_N"/>
</dbReference>
<dbReference type="NCBIfam" id="NF000642">
    <property type="entry name" value="PRK00024.1"/>
    <property type="match status" value="1"/>
</dbReference>
<dbReference type="NCBIfam" id="TIGR00608">
    <property type="entry name" value="radc"/>
    <property type="match status" value="1"/>
</dbReference>
<dbReference type="PANTHER" id="PTHR30471">
    <property type="entry name" value="DNA REPAIR PROTEIN RADC"/>
    <property type="match status" value="1"/>
</dbReference>
<dbReference type="PANTHER" id="PTHR30471:SF3">
    <property type="entry name" value="UPF0758 PROTEIN YEES-RELATED"/>
    <property type="match status" value="1"/>
</dbReference>
<dbReference type="Pfam" id="PF04002">
    <property type="entry name" value="RadC"/>
    <property type="match status" value="1"/>
</dbReference>
<dbReference type="Pfam" id="PF20582">
    <property type="entry name" value="UPF0758_N"/>
    <property type="match status" value="1"/>
</dbReference>
<dbReference type="SUPFAM" id="SSF47781">
    <property type="entry name" value="RuvA domain 2-like"/>
    <property type="match status" value="1"/>
</dbReference>
<dbReference type="PROSITE" id="PS50249">
    <property type="entry name" value="MPN"/>
    <property type="match status" value="1"/>
</dbReference>
<dbReference type="PROSITE" id="PS01302">
    <property type="entry name" value="UPF0758"/>
    <property type="match status" value="1"/>
</dbReference>
<proteinExistence type="inferred from homology"/>
<gene>
    <name type="ordered locus">Ping_0056</name>
</gene>